<accession>Q88JK6</accession>
<evidence type="ECO:0000255" key="1"/>
<evidence type="ECO:0000255" key="2">
    <source>
        <dbReference type="PROSITE-ProRule" id="PRU00102"/>
    </source>
</evidence>
<evidence type="ECO:0000255" key="3">
    <source>
        <dbReference type="PROSITE-ProRule" id="PRU00284"/>
    </source>
</evidence>
<evidence type="ECO:0000269" key="4">
    <source>
    </source>
</evidence>
<evidence type="ECO:0000269" key="5">
    <source>
    </source>
</evidence>
<evidence type="ECO:0000303" key="6">
    <source>
    </source>
</evidence>
<evidence type="ECO:0000303" key="7">
    <source>
    </source>
</evidence>
<evidence type="ECO:0000305" key="8"/>
<evidence type="ECO:0000305" key="9">
    <source>
    </source>
</evidence>
<evidence type="ECO:0000312" key="10">
    <source>
        <dbReference type="EMBL" id="AAN68251.1"/>
    </source>
</evidence>
<evidence type="ECO:0000312" key="11">
    <source>
        <dbReference type="PDB" id="6S38"/>
    </source>
</evidence>
<evidence type="ECO:0007744" key="12">
    <source>
        <dbReference type="PDB" id="6S18"/>
    </source>
</evidence>
<evidence type="ECO:0007744" key="13">
    <source>
        <dbReference type="PDB" id="6S1A"/>
    </source>
</evidence>
<evidence type="ECO:0007744" key="14">
    <source>
        <dbReference type="PDB" id="6S33"/>
    </source>
</evidence>
<evidence type="ECO:0007744" key="15">
    <source>
        <dbReference type="PDB" id="6S37"/>
    </source>
</evidence>
<evidence type="ECO:0007744" key="16">
    <source>
        <dbReference type="PDB" id="6S38"/>
    </source>
</evidence>
<evidence type="ECO:0007744" key="17">
    <source>
        <dbReference type="PDB" id="6S3B"/>
    </source>
</evidence>
<evidence type="ECO:0007829" key="18">
    <source>
        <dbReference type="PDB" id="6S33"/>
    </source>
</evidence>
<sequence>MVPTRSTARMLANLKIRTGMFWVLSLFSLTLLFSTASAWWAALGSDQQITELDQTAHQSDRLNNALLMAIRSSANVSSGFIEQLGGHDESAGKRMALSVELNNKSQALVDEFVENAREPALRGLATELQATFAEYAKAVAGQREATRQRSLEQYFKVNSDAGNAMGRLQTLRQQLVTTLSERGQQIMLESDRRLARAQLLSLCLLGVTVVLAVLCWAFIAQRVLHPLREAGGHFRRIASGDLSVPVQGQGNNEIGQLFHELQRMQQSQRDTLGQINNCARQLDAAATALNAVTEESANNLRQQGQELEQAATAVTEMTTAVEEVARNAITTSQTTSESNQLAAQSRRQVSENIDGTEAMTREIQTSSAHLQQLVGQVRDIGKVLEVIRSVSEQTNLLALNAAIEAARAGEAGRGFAVVADEVRTLAYRTQQSTQEIEQMIGSVQAGTEAAVASMQASTNRAQSTLDVTLASGQVLEGIYSAIGEINERNLVIASAAEEQAQVAREVDRNLLNIRELSNHSAAGAQQTSEASKALSGLVGEMTALVGRFKV</sequence>
<name>PCAY_PSEPK</name>
<comment type="function">
    <text evidence="4 8">Chemotactic-signal transducers respond to changes in the concentration of attractants and repellents in the environment, transduce a signal from the outside to the inside of the cell, and facilitate sensory adaptation through the variation of the level of methylation (Probable). PcaY recognizes a wide range of compounds containing a C6-membered ring with a carboxylate group. Binds preferentially compounds that serve as carbon sources and among them those that rapidly promote growth. Tightest binding compounds are quinate, shikimate, 3-dehydroshikimate and protocatechuate, which are at the interception of the biosynthetic shikimate and catabolic quinate pathways (PubMed:28620365).</text>
</comment>
<comment type="subunit">
    <text evidence="4">Ligand free PcaY_PP-ligand-binding domain (LBD) is present in a monomer-dimer equilibrium (PubMed:28620365). Only the dimeric LBD is able to bind ligands which in turn causes dimer stabilization (PubMed:28620365).</text>
</comment>
<comment type="subcellular location">
    <subcellularLocation>
        <location evidence="8">Cell inner membrane</location>
        <topology evidence="1">Multi-pass membrane protein</topology>
    </subcellularLocation>
</comment>
<comment type="domain">
    <text evidence="5">The ligand-binding domain (LBD) forms a four-helix bundle (4HB), and both ligand binding sites of the dimer are occupied with the high-affinity ligands protocatechuate and quinate, whereas the lower-affinity ligands benzoate and salicylate are present in only one site. Ligand binding causes rigid-body scissoring movements of both monomers of the dimer.</text>
</comment>
<comment type="disruption phenotype">
    <text evidence="4">Disruption of the gene abolishes chemotaxis to benzoate, quinate, protocatechuate and shikimate. Inactivation of the gene does not alter competitive plant root colonization.</text>
</comment>
<comment type="similarity">
    <text evidence="8">Belongs to the methyl-accepting chemotaxis (MCP) protein family.</text>
</comment>
<protein>
    <recommendedName>
        <fullName evidence="8">Methyl-accepting chemotaxis protein PcaY</fullName>
    </recommendedName>
    <alternativeName>
        <fullName evidence="7">PcaY_PP</fullName>
    </alternativeName>
</protein>
<feature type="chain" id="PRO_0000454714" description="Methyl-accepting chemotaxis protein PcaY">
    <location>
        <begin position="1"/>
        <end position="550"/>
    </location>
</feature>
<feature type="topological domain" description="Cytoplasmic" evidence="8">
    <location>
        <begin position="1"/>
        <end position="19"/>
    </location>
</feature>
<feature type="transmembrane region" description="Helical" evidence="1">
    <location>
        <begin position="20"/>
        <end position="40"/>
    </location>
</feature>
<feature type="topological domain" description="Periplasmic" evidence="8">
    <location>
        <begin position="41"/>
        <end position="198"/>
    </location>
</feature>
<feature type="transmembrane region" description="Helical" evidence="1">
    <location>
        <begin position="199"/>
        <end position="219"/>
    </location>
</feature>
<feature type="topological domain" description="Cytoplasmic" evidence="8">
    <location>
        <begin position="220"/>
        <end position="550"/>
    </location>
</feature>
<feature type="domain" description="HAMP" evidence="2">
    <location>
        <begin position="221"/>
        <end position="273"/>
    </location>
</feature>
<feature type="domain" description="Methyl-accepting transducer" evidence="3">
    <location>
        <begin position="278"/>
        <end position="514"/>
    </location>
</feature>
<feature type="region of interest" description="Ligand-binding domain" evidence="9">
    <location>
        <begin position="44"/>
        <end position="196"/>
    </location>
</feature>
<feature type="binding site" evidence="5 14">
    <location>
        <begin position="71"/>
        <end position="78"/>
    </location>
    <ligand>
        <name>3,4-dihydroxybenzoate</name>
        <dbReference type="ChEBI" id="CHEBI:36241"/>
    </ligand>
</feature>
<feature type="binding site" evidence="5 11">
    <location>
        <begin position="71"/>
        <end position="78"/>
    </location>
    <ligand>
        <name>L-quinate</name>
        <dbReference type="ChEBI" id="CHEBI:29751"/>
    </ligand>
</feature>
<feature type="binding site" evidence="5 17">
    <location>
        <position position="71"/>
    </location>
    <ligand>
        <name>benzoate</name>
        <dbReference type="ChEBI" id="CHEBI:16150"/>
    </ligand>
</feature>
<feature type="binding site" evidence="5 15">
    <location>
        <position position="71"/>
    </location>
    <ligand>
        <name>salicylate</name>
        <dbReference type="ChEBI" id="CHEBI:30762"/>
    </ligand>
</feature>
<feature type="binding site" evidence="5 17">
    <location>
        <position position="75"/>
    </location>
    <ligand>
        <name>benzoate</name>
        <dbReference type="ChEBI" id="CHEBI:16150"/>
    </ligand>
</feature>
<feature type="binding site" evidence="5 15">
    <location>
        <position position="75"/>
    </location>
    <ligand>
        <name>salicylate</name>
        <dbReference type="ChEBI" id="CHEBI:30762"/>
    </ligand>
</feature>
<feature type="binding site" evidence="5 11">
    <location>
        <position position="135"/>
    </location>
    <ligand>
        <name>L-quinate</name>
        <dbReference type="ChEBI" id="CHEBI:29751"/>
    </ligand>
</feature>
<feature type="binding site" evidence="5 15">
    <location>
        <position position="135"/>
    </location>
    <ligand>
        <name>salicylate</name>
        <dbReference type="ChEBI" id="CHEBI:30762"/>
    </ligand>
</feature>
<feature type="binding site" evidence="5 11">
    <location>
        <position position="142"/>
    </location>
    <ligand>
        <name>L-quinate</name>
        <dbReference type="ChEBI" id="CHEBI:29751"/>
    </ligand>
</feature>
<feature type="binding site" evidence="5 11">
    <location>
        <position position="158"/>
    </location>
    <ligand>
        <name>L-quinate</name>
        <dbReference type="ChEBI" id="CHEBI:29751"/>
    </ligand>
</feature>
<feature type="binding site" evidence="5 14">
    <location>
        <position position="169"/>
    </location>
    <ligand>
        <name>3,4-dihydroxybenzoate</name>
        <dbReference type="ChEBI" id="CHEBI:36241"/>
    </ligand>
</feature>
<feature type="mutagenesis site" description="Abolishes binding of all ligands." evidence="5">
    <original>R</original>
    <variation>A</variation>
    <location>
        <position position="71"/>
    </location>
</feature>
<feature type="mutagenesis site" description="Abolishes binding of quinate and protocatechuate, and shows reduced affinity for benzoate and salicylate." evidence="5">
    <original>S</original>
    <variation>A</variation>
    <location>
        <position position="73"/>
    </location>
</feature>
<feature type="mutagenesis site" description="Abolishes binding of benzoate and protocatechuate, and shows reduced affinity for quinate and salicylate." evidence="5">
    <original>N</original>
    <variation>A</variation>
    <location>
        <position position="75"/>
    </location>
</feature>
<feature type="mutagenesis site" description="Does not significantly alter binding of benzoate and protocatechuate." evidence="5">
    <original>S</original>
    <variation>A</variation>
    <location>
        <position position="78"/>
    </location>
</feature>
<feature type="mutagenesis site" description="Strong decrease in quinate binding and small decrease in affinity for salicylate." evidence="5">
    <original>Q</original>
    <variation>A</variation>
    <location>
        <position position="142"/>
    </location>
</feature>
<feature type="mutagenesis site" description="Strong decrease in quinate binding and small decrease in affinity for salicylate." evidence="5">
    <original>N</original>
    <variation>A</variation>
    <location>
        <position position="158"/>
    </location>
</feature>
<feature type="helix" evidence="18">
    <location>
        <begin position="48"/>
        <end position="84"/>
    </location>
</feature>
<feature type="helix" evidence="18">
    <location>
        <begin position="88"/>
        <end position="115"/>
    </location>
</feature>
<feature type="helix" evidence="18">
    <location>
        <begin position="119"/>
        <end position="147"/>
    </location>
</feature>
<feature type="helix" evidence="18">
    <location>
        <begin position="151"/>
        <end position="187"/>
    </location>
</feature>
<dbReference type="EMBL" id="AE015451">
    <property type="protein sequence ID" value="AAN68251.1"/>
    <property type="molecule type" value="Genomic_DNA"/>
</dbReference>
<dbReference type="RefSeq" id="NP_744787.1">
    <property type="nucleotide sequence ID" value="NC_002947.4"/>
</dbReference>
<dbReference type="PDB" id="6S18">
    <property type="method" value="X-ray"/>
    <property type="resolution" value="1.60 A"/>
    <property type="chains" value="A/B=1-550"/>
</dbReference>
<dbReference type="PDB" id="6S1A">
    <property type="method" value="X-ray"/>
    <property type="resolution" value="2.11 A"/>
    <property type="chains" value="A/B=1-550"/>
</dbReference>
<dbReference type="PDB" id="6S33">
    <property type="method" value="X-ray"/>
    <property type="resolution" value="1.56 A"/>
    <property type="chains" value="A/B=1-550"/>
</dbReference>
<dbReference type="PDB" id="6S37">
    <property type="method" value="X-ray"/>
    <property type="resolution" value="2.30 A"/>
    <property type="chains" value="A/B=1-550"/>
</dbReference>
<dbReference type="PDB" id="6S38">
    <property type="method" value="X-ray"/>
    <property type="resolution" value="2.15 A"/>
    <property type="chains" value="A/B=1-550"/>
</dbReference>
<dbReference type="PDB" id="6S3B">
    <property type="method" value="X-ray"/>
    <property type="resolution" value="1.95 A"/>
    <property type="chains" value="A/B=1-550"/>
</dbReference>
<dbReference type="PDBsum" id="6S18"/>
<dbReference type="PDBsum" id="6S1A"/>
<dbReference type="PDBsum" id="6S33"/>
<dbReference type="PDBsum" id="6S37"/>
<dbReference type="PDBsum" id="6S38"/>
<dbReference type="PDBsum" id="6S3B"/>
<dbReference type="SMR" id="Q88JK6"/>
<dbReference type="STRING" id="160488.PP_2643"/>
<dbReference type="PaxDb" id="160488-PP_2643"/>
<dbReference type="KEGG" id="ppu:PP_2643"/>
<dbReference type="PATRIC" id="fig|160488.4.peg.2804"/>
<dbReference type="eggNOG" id="COG0840">
    <property type="taxonomic scope" value="Bacteria"/>
</dbReference>
<dbReference type="HOGENOM" id="CLU_000445_107_27_6"/>
<dbReference type="OrthoDB" id="9781845at2"/>
<dbReference type="PhylomeDB" id="Q88JK6"/>
<dbReference type="BioCyc" id="PPUT160488:G1G01-2824-MONOMER"/>
<dbReference type="Proteomes" id="UP000000556">
    <property type="component" value="Chromosome"/>
</dbReference>
<dbReference type="GO" id="GO:0005886">
    <property type="term" value="C:plasma membrane"/>
    <property type="evidence" value="ECO:0007669"/>
    <property type="project" value="UniProtKB-SubCell"/>
</dbReference>
<dbReference type="GO" id="GO:0004888">
    <property type="term" value="F:transmembrane signaling receptor activity"/>
    <property type="evidence" value="ECO:0007669"/>
    <property type="project" value="InterPro"/>
</dbReference>
<dbReference type="GO" id="GO:0006935">
    <property type="term" value="P:chemotaxis"/>
    <property type="evidence" value="ECO:0007669"/>
    <property type="project" value="UniProtKB-KW"/>
</dbReference>
<dbReference type="GO" id="GO:0007165">
    <property type="term" value="P:signal transduction"/>
    <property type="evidence" value="ECO:0007669"/>
    <property type="project" value="UniProtKB-KW"/>
</dbReference>
<dbReference type="CDD" id="cd06225">
    <property type="entry name" value="HAMP"/>
    <property type="match status" value="1"/>
</dbReference>
<dbReference type="CDD" id="cd11386">
    <property type="entry name" value="MCP_signal"/>
    <property type="match status" value="1"/>
</dbReference>
<dbReference type="FunFam" id="1.10.287.950:FF:000001">
    <property type="entry name" value="Methyl-accepting chemotaxis sensory transducer"/>
    <property type="match status" value="1"/>
</dbReference>
<dbReference type="Gene3D" id="1.10.287.950">
    <property type="entry name" value="Methyl-accepting chemotaxis protein"/>
    <property type="match status" value="1"/>
</dbReference>
<dbReference type="InterPro" id="IPR004090">
    <property type="entry name" value="Chemotax_Me-accpt_rcpt"/>
</dbReference>
<dbReference type="InterPro" id="IPR003660">
    <property type="entry name" value="HAMP_dom"/>
</dbReference>
<dbReference type="InterPro" id="IPR004089">
    <property type="entry name" value="MCPsignal_dom"/>
</dbReference>
<dbReference type="InterPro" id="IPR003122">
    <property type="entry name" value="Tar_rcpt_lig-bd"/>
</dbReference>
<dbReference type="PANTHER" id="PTHR32089">
    <property type="entry name" value="METHYL-ACCEPTING CHEMOTAXIS PROTEIN MCPB"/>
    <property type="match status" value="1"/>
</dbReference>
<dbReference type="PANTHER" id="PTHR32089:SF120">
    <property type="entry name" value="METHYL-ACCEPTING CHEMOTAXIS PROTEIN TLPQ"/>
    <property type="match status" value="1"/>
</dbReference>
<dbReference type="Pfam" id="PF00672">
    <property type="entry name" value="HAMP"/>
    <property type="match status" value="1"/>
</dbReference>
<dbReference type="Pfam" id="PF00015">
    <property type="entry name" value="MCPsignal"/>
    <property type="match status" value="1"/>
</dbReference>
<dbReference type="Pfam" id="PF02203">
    <property type="entry name" value="TarH"/>
    <property type="match status" value="1"/>
</dbReference>
<dbReference type="PRINTS" id="PR00260">
    <property type="entry name" value="CHEMTRNSDUCR"/>
</dbReference>
<dbReference type="SMART" id="SM00304">
    <property type="entry name" value="HAMP"/>
    <property type="match status" value="1"/>
</dbReference>
<dbReference type="SMART" id="SM00283">
    <property type="entry name" value="MA"/>
    <property type="match status" value="1"/>
</dbReference>
<dbReference type="SUPFAM" id="SSF58104">
    <property type="entry name" value="Methyl-accepting chemotaxis protein (MCP) signaling domain"/>
    <property type="match status" value="1"/>
</dbReference>
<dbReference type="PROSITE" id="PS50111">
    <property type="entry name" value="CHEMOTAXIS_TRANSDUC_2"/>
    <property type="match status" value="1"/>
</dbReference>
<dbReference type="PROSITE" id="PS50885">
    <property type="entry name" value="HAMP"/>
    <property type="match status" value="1"/>
</dbReference>
<organism>
    <name type="scientific">Pseudomonas putida (strain ATCC 47054 / DSM 6125 / CFBP 8728 / NCIMB 11950 / KT2440)</name>
    <dbReference type="NCBI Taxonomy" id="160488"/>
    <lineage>
        <taxon>Bacteria</taxon>
        <taxon>Pseudomonadati</taxon>
        <taxon>Pseudomonadota</taxon>
        <taxon>Gammaproteobacteria</taxon>
        <taxon>Pseudomonadales</taxon>
        <taxon>Pseudomonadaceae</taxon>
        <taxon>Pseudomonas</taxon>
    </lineage>
</organism>
<proteinExistence type="evidence at protein level"/>
<gene>
    <name evidence="6" type="primary">pcaY</name>
    <name evidence="10" type="ordered locus">PP_2643</name>
</gene>
<reference key="1">
    <citation type="journal article" date="2002" name="Environ. Microbiol.">
        <title>Complete genome sequence and comparative analysis of the metabolically versatile Pseudomonas putida KT2440.</title>
        <authorList>
            <person name="Nelson K.E."/>
            <person name="Weinel C."/>
            <person name="Paulsen I.T."/>
            <person name="Dodson R.J."/>
            <person name="Hilbert H."/>
            <person name="Martins dos Santos V.A.P."/>
            <person name="Fouts D.E."/>
            <person name="Gill S.R."/>
            <person name="Pop M."/>
            <person name="Holmes M."/>
            <person name="Brinkac L.M."/>
            <person name="Beanan M.J."/>
            <person name="DeBoy R.T."/>
            <person name="Daugherty S.C."/>
            <person name="Kolonay J.F."/>
            <person name="Madupu R."/>
            <person name="Nelson W.C."/>
            <person name="White O."/>
            <person name="Peterson J.D."/>
            <person name="Khouri H.M."/>
            <person name="Hance I."/>
            <person name="Chris Lee P."/>
            <person name="Holtzapple E.K."/>
            <person name="Scanlan D."/>
            <person name="Tran K."/>
            <person name="Moazzez A."/>
            <person name="Utterback T.R."/>
            <person name="Rizzo M."/>
            <person name="Lee K."/>
            <person name="Kosack D."/>
            <person name="Moestl D."/>
            <person name="Wedler H."/>
            <person name="Lauber J."/>
            <person name="Stjepandic D."/>
            <person name="Hoheisel J."/>
            <person name="Straetz M."/>
            <person name="Heim S."/>
            <person name="Kiewitz C."/>
            <person name="Eisen J.A."/>
            <person name="Timmis K.N."/>
            <person name="Duesterhoeft A."/>
            <person name="Tuemmler B."/>
            <person name="Fraser C.M."/>
        </authorList>
    </citation>
    <scope>NUCLEOTIDE SEQUENCE [LARGE SCALE GENOMIC DNA]</scope>
    <source>
        <strain>ATCC 47054 / DSM 6125 / CFBP 8728 / NCIMB 11950 / KT2440</strain>
    </source>
</reference>
<reference key="2">
    <citation type="journal article" date="2017" name="Front. Microbiol.">
        <title>Metabolic value chemoattractants are preferentially recognized at broad ligand range chemoreceptor of Pseudomonas putida KT2440.</title>
        <authorList>
            <person name="Fernandez M."/>
            <person name="Matilla M.A."/>
            <person name="Ortega A."/>
            <person name="Krell T."/>
        </authorList>
    </citation>
    <scope>FUNCTION</scope>
    <scope>SUBUNIT</scope>
    <scope>DISRUPTION PHENOTYPE</scope>
    <source>
        <strain>ATCC 47054 / DSM 6125 / CFBP 8728 / NCIMB 11950 / KT2440</strain>
    </source>
</reference>
<reference evidence="12 13 14 15 16 17" key="3">
    <citation type="journal article" date="2021" name="FEBS J.">
        <title>The structural basis for signal promiscuity in a bacterial chemoreceptor.</title>
        <authorList>
            <person name="Gavira J.A."/>
            <person name="Matilla M.A."/>
            <person name="Fernandez M."/>
            <person name="Krell T."/>
        </authorList>
    </citation>
    <scope>X-RAY CRYSTALLOGRAPHY (1.56 ANGSTROMS) OF 47-190 OF APOPROTEIN AND IN COMPLEXES WITH PROTOCATECHUATE; QUINATE; BENZOATE AND 2-HYDROXYBENZOIC ACID</scope>
    <scope>DOMAIN</scope>
    <scope>MUTAGENESIS OF ARG-71; SER-73; ASN-75; SER-78; GLN-142 AND ASN-158</scope>
</reference>
<keyword id="KW-0002">3D-structure</keyword>
<keyword id="KW-0997">Cell inner membrane</keyword>
<keyword id="KW-1003">Cell membrane</keyword>
<keyword id="KW-0145">Chemotaxis</keyword>
<keyword id="KW-0472">Membrane</keyword>
<keyword id="KW-0488">Methylation</keyword>
<keyword id="KW-1185">Reference proteome</keyword>
<keyword id="KW-0807">Transducer</keyword>
<keyword id="KW-0812">Transmembrane</keyword>
<keyword id="KW-1133">Transmembrane helix</keyword>